<keyword id="KW-0687">Ribonucleoprotein</keyword>
<keyword id="KW-0689">Ribosomal protein</keyword>
<keyword id="KW-0694">RNA-binding</keyword>
<keyword id="KW-0699">rRNA-binding</keyword>
<organism>
    <name type="scientific">Streptococcus pyogenes serotype M18 (strain MGAS8232)</name>
    <dbReference type="NCBI Taxonomy" id="186103"/>
    <lineage>
        <taxon>Bacteria</taxon>
        <taxon>Bacillati</taxon>
        <taxon>Bacillota</taxon>
        <taxon>Bacilli</taxon>
        <taxon>Lactobacillales</taxon>
        <taxon>Streptococcaceae</taxon>
        <taxon>Streptococcus</taxon>
    </lineage>
</organism>
<dbReference type="EMBL" id="AE009949">
    <property type="protein sequence ID" value="AAL96885.1"/>
    <property type="molecule type" value="Genomic_DNA"/>
</dbReference>
<dbReference type="RefSeq" id="WP_000440811.1">
    <property type="nucleotide sequence ID" value="NC_003485.1"/>
</dbReference>
<dbReference type="SMR" id="Q7CNP8"/>
<dbReference type="GeneID" id="69900035"/>
<dbReference type="KEGG" id="spm:spyM18_0061"/>
<dbReference type="HOGENOM" id="CLU_073626_1_0_9"/>
<dbReference type="GO" id="GO:0022627">
    <property type="term" value="C:cytosolic small ribosomal subunit"/>
    <property type="evidence" value="ECO:0007669"/>
    <property type="project" value="TreeGrafter"/>
</dbReference>
<dbReference type="GO" id="GO:0019843">
    <property type="term" value="F:rRNA binding"/>
    <property type="evidence" value="ECO:0007669"/>
    <property type="project" value="UniProtKB-UniRule"/>
</dbReference>
<dbReference type="GO" id="GO:0003735">
    <property type="term" value="F:structural constituent of ribosome"/>
    <property type="evidence" value="ECO:0007669"/>
    <property type="project" value="InterPro"/>
</dbReference>
<dbReference type="GO" id="GO:0006412">
    <property type="term" value="P:translation"/>
    <property type="evidence" value="ECO:0007669"/>
    <property type="project" value="UniProtKB-UniRule"/>
</dbReference>
<dbReference type="CDD" id="cd00364">
    <property type="entry name" value="Ribosomal_uS17"/>
    <property type="match status" value="1"/>
</dbReference>
<dbReference type="FunFam" id="2.40.50.140:FF:000026">
    <property type="entry name" value="30S ribosomal protein S17"/>
    <property type="match status" value="1"/>
</dbReference>
<dbReference type="Gene3D" id="2.40.50.140">
    <property type="entry name" value="Nucleic acid-binding proteins"/>
    <property type="match status" value="1"/>
</dbReference>
<dbReference type="HAMAP" id="MF_01345_B">
    <property type="entry name" value="Ribosomal_uS17_B"/>
    <property type="match status" value="1"/>
</dbReference>
<dbReference type="InterPro" id="IPR012340">
    <property type="entry name" value="NA-bd_OB-fold"/>
</dbReference>
<dbReference type="InterPro" id="IPR000266">
    <property type="entry name" value="Ribosomal_uS17"/>
</dbReference>
<dbReference type="InterPro" id="IPR019984">
    <property type="entry name" value="Ribosomal_uS17_bact/chlr"/>
</dbReference>
<dbReference type="InterPro" id="IPR019979">
    <property type="entry name" value="Ribosomal_uS17_CS"/>
</dbReference>
<dbReference type="NCBIfam" id="NF004123">
    <property type="entry name" value="PRK05610.1"/>
    <property type="match status" value="1"/>
</dbReference>
<dbReference type="NCBIfam" id="TIGR03635">
    <property type="entry name" value="uS17_bact"/>
    <property type="match status" value="1"/>
</dbReference>
<dbReference type="PANTHER" id="PTHR10744">
    <property type="entry name" value="40S RIBOSOMAL PROTEIN S11 FAMILY MEMBER"/>
    <property type="match status" value="1"/>
</dbReference>
<dbReference type="PANTHER" id="PTHR10744:SF1">
    <property type="entry name" value="SMALL RIBOSOMAL SUBUNIT PROTEIN US17M"/>
    <property type="match status" value="1"/>
</dbReference>
<dbReference type="Pfam" id="PF00366">
    <property type="entry name" value="Ribosomal_S17"/>
    <property type="match status" value="1"/>
</dbReference>
<dbReference type="PRINTS" id="PR00973">
    <property type="entry name" value="RIBOSOMALS17"/>
</dbReference>
<dbReference type="SUPFAM" id="SSF50249">
    <property type="entry name" value="Nucleic acid-binding proteins"/>
    <property type="match status" value="1"/>
</dbReference>
<dbReference type="PROSITE" id="PS00056">
    <property type="entry name" value="RIBOSOMAL_S17"/>
    <property type="match status" value="1"/>
</dbReference>
<reference key="1">
    <citation type="journal article" date="2002" name="Proc. Natl. Acad. Sci. U.S.A.">
        <title>Genome sequence and comparative microarray analysis of serotype M18 group A Streptococcus strains associated with acute rheumatic fever outbreaks.</title>
        <authorList>
            <person name="Smoot J.C."/>
            <person name="Barbian K.D."/>
            <person name="Van Gompel J.J."/>
            <person name="Smoot L.M."/>
            <person name="Chaussee M.S."/>
            <person name="Sylva G.L."/>
            <person name="Sturdevant D.E."/>
            <person name="Ricklefs S.M."/>
            <person name="Porcella S.F."/>
            <person name="Parkins L.D."/>
            <person name="Beres S.B."/>
            <person name="Campbell D.S."/>
            <person name="Smith T.M."/>
            <person name="Zhang Q."/>
            <person name="Kapur V."/>
            <person name="Daly J.A."/>
            <person name="Veasy L.G."/>
            <person name="Musser J.M."/>
        </authorList>
    </citation>
    <scope>NUCLEOTIDE SEQUENCE [LARGE SCALE GENOMIC DNA]</scope>
    <source>
        <strain>MGAS8232</strain>
    </source>
</reference>
<proteinExistence type="inferred from homology"/>
<name>RS17_STRP8</name>
<gene>
    <name evidence="1" type="primary">rpsQ</name>
    <name type="ordered locus">spyM18_0061</name>
</gene>
<protein>
    <recommendedName>
        <fullName evidence="1">Small ribosomal subunit protein uS17</fullName>
    </recommendedName>
    <alternativeName>
        <fullName evidence="2">30S ribosomal protein S17</fullName>
    </alternativeName>
</protein>
<sequence>MERNQRKTLYGRVVSDKMDKTITVVVETKRNHPVYGKRINYSKKYKAHDENNVAKEGDIVRIMETRPLSATKRFRLVEVVEKAVII</sequence>
<comment type="function">
    <text evidence="1">One of the primary rRNA binding proteins, it binds specifically to the 5'-end of 16S ribosomal RNA.</text>
</comment>
<comment type="subunit">
    <text evidence="1">Part of the 30S ribosomal subunit.</text>
</comment>
<comment type="similarity">
    <text evidence="1">Belongs to the universal ribosomal protein uS17 family.</text>
</comment>
<feature type="chain" id="PRO_0000233577" description="Small ribosomal subunit protein uS17">
    <location>
        <begin position="1"/>
        <end position="86"/>
    </location>
</feature>
<evidence type="ECO:0000255" key="1">
    <source>
        <dbReference type="HAMAP-Rule" id="MF_01345"/>
    </source>
</evidence>
<evidence type="ECO:0000305" key="2"/>
<accession>Q7CNP8</accession>